<keyword id="KW-0030">Aminoacyl-tRNA synthetase</keyword>
<keyword id="KW-0067">ATP-binding</keyword>
<keyword id="KW-0963">Cytoplasm</keyword>
<keyword id="KW-0436">Ligase</keyword>
<keyword id="KW-0547">Nucleotide-binding</keyword>
<keyword id="KW-0648">Protein biosynthesis</keyword>
<keyword id="KW-1185">Reference proteome</keyword>
<dbReference type="EC" id="6.1.1.14" evidence="1"/>
<dbReference type="EMBL" id="CP000423">
    <property type="protein sequence ID" value="ABJ70280.1"/>
    <property type="molecule type" value="Genomic_DNA"/>
</dbReference>
<dbReference type="RefSeq" id="WP_003579243.1">
    <property type="nucleotide sequence ID" value="NC_008526.1"/>
</dbReference>
<dbReference type="RefSeq" id="YP_806722.1">
    <property type="nucleotide sequence ID" value="NC_008526.1"/>
</dbReference>
<dbReference type="SMR" id="Q038U2"/>
<dbReference type="STRING" id="321967.LSEI_1504"/>
<dbReference type="PaxDb" id="321967-LSEI_1504"/>
<dbReference type="KEGG" id="lca:LSEI_1504"/>
<dbReference type="PATRIC" id="fig|321967.11.peg.1486"/>
<dbReference type="HOGENOM" id="CLU_057066_1_0_9"/>
<dbReference type="Proteomes" id="UP000001651">
    <property type="component" value="Chromosome"/>
</dbReference>
<dbReference type="GO" id="GO:0005829">
    <property type="term" value="C:cytosol"/>
    <property type="evidence" value="ECO:0007669"/>
    <property type="project" value="TreeGrafter"/>
</dbReference>
<dbReference type="GO" id="GO:0005524">
    <property type="term" value="F:ATP binding"/>
    <property type="evidence" value="ECO:0007669"/>
    <property type="project" value="UniProtKB-UniRule"/>
</dbReference>
<dbReference type="GO" id="GO:0140096">
    <property type="term" value="F:catalytic activity, acting on a protein"/>
    <property type="evidence" value="ECO:0007669"/>
    <property type="project" value="UniProtKB-ARBA"/>
</dbReference>
<dbReference type="GO" id="GO:0004820">
    <property type="term" value="F:glycine-tRNA ligase activity"/>
    <property type="evidence" value="ECO:0007669"/>
    <property type="project" value="UniProtKB-UniRule"/>
</dbReference>
<dbReference type="GO" id="GO:0016740">
    <property type="term" value="F:transferase activity"/>
    <property type="evidence" value="ECO:0007669"/>
    <property type="project" value="UniProtKB-ARBA"/>
</dbReference>
<dbReference type="GO" id="GO:0006426">
    <property type="term" value="P:glycyl-tRNA aminoacylation"/>
    <property type="evidence" value="ECO:0007669"/>
    <property type="project" value="UniProtKB-UniRule"/>
</dbReference>
<dbReference type="CDD" id="cd00733">
    <property type="entry name" value="GlyRS_alpha_core"/>
    <property type="match status" value="1"/>
</dbReference>
<dbReference type="FunFam" id="3.30.930.10:FF:000006">
    <property type="entry name" value="Glycine--tRNA ligase alpha subunit"/>
    <property type="match status" value="1"/>
</dbReference>
<dbReference type="Gene3D" id="3.30.930.10">
    <property type="entry name" value="Bira Bifunctional Protein, Domain 2"/>
    <property type="match status" value="1"/>
</dbReference>
<dbReference type="Gene3D" id="1.20.58.180">
    <property type="entry name" value="Class II aaRS and biotin synthetases, domain 2"/>
    <property type="match status" value="1"/>
</dbReference>
<dbReference type="HAMAP" id="MF_00254">
    <property type="entry name" value="Gly_tRNA_synth_alpha"/>
    <property type="match status" value="1"/>
</dbReference>
<dbReference type="InterPro" id="IPR045864">
    <property type="entry name" value="aa-tRNA-synth_II/BPL/LPL"/>
</dbReference>
<dbReference type="InterPro" id="IPR006194">
    <property type="entry name" value="Gly-tRNA-synth_heterodimer"/>
</dbReference>
<dbReference type="InterPro" id="IPR002310">
    <property type="entry name" value="Gly-tRNA_ligase_asu"/>
</dbReference>
<dbReference type="NCBIfam" id="TIGR00388">
    <property type="entry name" value="glyQ"/>
    <property type="match status" value="1"/>
</dbReference>
<dbReference type="NCBIfam" id="NF006827">
    <property type="entry name" value="PRK09348.1"/>
    <property type="match status" value="1"/>
</dbReference>
<dbReference type="PANTHER" id="PTHR30075:SF2">
    <property type="entry name" value="GLYCINE--TRNA LIGASE, CHLOROPLASTIC_MITOCHONDRIAL 2"/>
    <property type="match status" value="1"/>
</dbReference>
<dbReference type="PANTHER" id="PTHR30075">
    <property type="entry name" value="GLYCYL-TRNA SYNTHETASE"/>
    <property type="match status" value="1"/>
</dbReference>
<dbReference type="Pfam" id="PF02091">
    <property type="entry name" value="tRNA-synt_2e"/>
    <property type="match status" value="1"/>
</dbReference>
<dbReference type="PRINTS" id="PR01044">
    <property type="entry name" value="TRNASYNTHGA"/>
</dbReference>
<dbReference type="SUPFAM" id="SSF55681">
    <property type="entry name" value="Class II aaRS and biotin synthetases"/>
    <property type="match status" value="1"/>
</dbReference>
<dbReference type="PROSITE" id="PS50861">
    <property type="entry name" value="AA_TRNA_LIGASE_II_GLYAB"/>
    <property type="match status" value="1"/>
</dbReference>
<reference key="1">
    <citation type="journal article" date="2006" name="Proc. Natl. Acad. Sci. U.S.A.">
        <title>Comparative genomics of the lactic acid bacteria.</title>
        <authorList>
            <person name="Makarova K.S."/>
            <person name="Slesarev A."/>
            <person name="Wolf Y.I."/>
            <person name="Sorokin A."/>
            <person name="Mirkin B."/>
            <person name="Koonin E.V."/>
            <person name="Pavlov A."/>
            <person name="Pavlova N."/>
            <person name="Karamychev V."/>
            <person name="Polouchine N."/>
            <person name="Shakhova V."/>
            <person name="Grigoriev I."/>
            <person name="Lou Y."/>
            <person name="Rohksar D."/>
            <person name="Lucas S."/>
            <person name="Huang K."/>
            <person name="Goodstein D.M."/>
            <person name="Hawkins T."/>
            <person name="Plengvidhya V."/>
            <person name="Welker D."/>
            <person name="Hughes J."/>
            <person name="Goh Y."/>
            <person name="Benson A."/>
            <person name="Baldwin K."/>
            <person name="Lee J.-H."/>
            <person name="Diaz-Muniz I."/>
            <person name="Dosti B."/>
            <person name="Smeianov V."/>
            <person name="Wechter W."/>
            <person name="Barabote R."/>
            <person name="Lorca G."/>
            <person name="Altermann E."/>
            <person name="Barrangou R."/>
            <person name="Ganesan B."/>
            <person name="Xie Y."/>
            <person name="Rawsthorne H."/>
            <person name="Tamir D."/>
            <person name="Parker C."/>
            <person name="Breidt F."/>
            <person name="Broadbent J.R."/>
            <person name="Hutkins R."/>
            <person name="O'Sullivan D."/>
            <person name="Steele J."/>
            <person name="Unlu G."/>
            <person name="Saier M.H. Jr."/>
            <person name="Klaenhammer T."/>
            <person name="Richardson P."/>
            <person name="Kozyavkin S."/>
            <person name="Weimer B.C."/>
            <person name="Mills D.A."/>
        </authorList>
    </citation>
    <scope>NUCLEOTIDE SEQUENCE [LARGE SCALE GENOMIC DNA]</scope>
    <source>
        <strain>ATCC 334 / BCRC 17002 / CCUG 31169 / CIP 107868 / KCTC 3260 / NRRL B-441</strain>
    </source>
</reference>
<organism>
    <name type="scientific">Lacticaseibacillus paracasei (strain ATCC 334 / BCRC 17002 / CCUG 31169 / CIP 107868 / KCTC 3260 / NRRL B-441)</name>
    <name type="common">Lactobacillus paracasei</name>
    <dbReference type="NCBI Taxonomy" id="321967"/>
    <lineage>
        <taxon>Bacteria</taxon>
        <taxon>Bacillati</taxon>
        <taxon>Bacillota</taxon>
        <taxon>Bacilli</taxon>
        <taxon>Lactobacillales</taxon>
        <taxon>Lactobacillaceae</taxon>
        <taxon>Lacticaseibacillus</taxon>
    </lineage>
</organism>
<name>SYGA_LACP3</name>
<comment type="catalytic activity">
    <reaction evidence="1">
        <text>tRNA(Gly) + glycine + ATP = glycyl-tRNA(Gly) + AMP + diphosphate</text>
        <dbReference type="Rhea" id="RHEA:16013"/>
        <dbReference type="Rhea" id="RHEA-COMP:9664"/>
        <dbReference type="Rhea" id="RHEA-COMP:9683"/>
        <dbReference type="ChEBI" id="CHEBI:30616"/>
        <dbReference type="ChEBI" id="CHEBI:33019"/>
        <dbReference type="ChEBI" id="CHEBI:57305"/>
        <dbReference type="ChEBI" id="CHEBI:78442"/>
        <dbReference type="ChEBI" id="CHEBI:78522"/>
        <dbReference type="ChEBI" id="CHEBI:456215"/>
        <dbReference type="EC" id="6.1.1.14"/>
    </reaction>
</comment>
<comment type="subunit">
    <text evidence="1">Tetramer of two alpha and two beta subunits.</text>
</comment>
<comment type="subcellular location">
    <subcellularLocation>
        <location evidence="1">Cytoplasm</location>
    </subcellularLocation>
</comment>
<comment type="similarity">
    <text evidence="1">Belongs to the class-II aminoacyl-tRNA synthetase family.</text>
</comment>
<evidence type="ECO:0000255" key="1">
    <source>
        <dbReference type="HAMAP-Rule" id="MF_00254"/>
    </source>
</evidence>
<feature type="chain" id="PRO_1000047437" description="Glycine--tRNA ligase alpha subunit">
    <location>
        <begin position="1"/>
        <end position="298"/>
    </location>
</feature>
<protein>
    <recommendedName>
        <fullName evidence="1">Glycine--tRNA ligase alpha subunit</fullName>
        <ecNumber evidence="1">6.1.1.14</ecNumber>
    </recommendedName>
    <alternativeName>
        <fullName evidence="1">Glycyl-tRNA synthetase alpha subunit</fullName>
        <shortName evidence="1">GlyRS</shortName>
    </alternativeName>
</protein>
<accession>Q038U2</accession>
<proteinExistence type="inferred from homology"/>
<sequence length="298" mass="34246">MTKKMDIQTMILTLQKFWGDKGCMLMQAYDVEKGAGTMSPYTFLRAIGPEPWNAAYVEPSRRPADGRYGENPNRLFQHHQFQVVMKPSPENIQEYYLDSLAALGINPLEHDIRFVEDNWENPSMGCAGVGWEVWLDGMEVSQFTYFQVVGGLEVSPVTSEITYGVERLASYIQDVNSVFDLEWGDGVLYGDIFKEPEYEHSKYAFEVSNQEMLLKFFDAYEKEAWRLMDLGLVHPAYDYILKCSHTFNLLDARGAVSVTERAGYMSRIRKMAHKVARAFVAERKKLGFPLLQHQTEVE</sequence>
<gene>
    <name evidence="1" type="primary">glyQ</name>
    <name type="ordered locus">LSEI_1504</name>
</gene>